<evidence type="ECO:0000255" key="1">
    <source>
        <dbReference type="HAMAP-Rule" id="MF_00098"/>
    </source>
</evidence>
<evidence type="ECO:0000256" key="2">
    <source>
        <dbReference type="SAM" id="MobiDB-lite"/>
    </source>
</evidence>
<feature type="chain" id="PRO_1000118741" description="Methionine--tRNA ligase">
    <location>
        <begin position="1"/>
        <end position="584"/>
    </location>
</feature>
<feature type="region of interest" description="Disordered" evidence="2">
    <location>
        <begin position="541"/>
        <end position="563"/>
    </location>
</feature>
<feature type="short sequence motif" description="'HIGH' region">
    <location>
        <begin position="12"/>
        <end position="22"/>
    </location>
</feature>
<feature type="short sequence motif" description="'KMSKS' region">
    <location>
        <begin position="334"/>
        <end position="338"/>
    </location>
</feature>
<feature type="binding site" evidence="1">
    <location>
        <position position="144"/>
    </location>
    <ligand>
        <name>Zn(2+)</name>
        <dbReference type="ChEBI" id="CHEBI:29105"/>
    </ligand>
</feature>
<feature type="binding site" evidence="1">
    <location>
        <position position="147"/>
    </location>
    <ligand>
        <name>Zn(2+)</name>
        <dbReference type="ChEBI" id="CHEBI:29105"/>
    </ligand>
</feature>
<feature type="binding site" evidence="1">
    <location>
        <position position="157"/>
    </location>
    <ligand>
        <name>Zn(2+)</name>
        <dbReference type="ChEBI" id="CHEBI:29105"/>
    </ligand>
</feature>
<feature type="binding site" evidence="1">
    <location>
        <position position="160"/>
    </location>
    <ligand>
        <name>Zn(2+)</name>
        <dbReference type="ChEBI" id="CHEBI:29105"/>
    </ligand>
</feature>
<feature type="binding site" evidence="1">
    <location>
        <position position="337"/>
    </location>
    <ligand>
        <name>ATP</name>
        <dbReference type="ChEBI" id="CHEBI:30616"/>
    </ligand>
</feature>
<proteinExistence type="inferred from homology"/>
<protein>
    <recommendedName>
        <fullName evidence="1">Methionine--tRNA ligase</fullName>
        <ecNumber evidence="1">6.1.1.10</ecNumber>
    </recommendedName>
    <alternativeName>
        <fullName evidence="1">Methionyl-tRNA synthetase</fullName>
        <shortName evidence="1">MetRS</shortName>
    </alternativeName>
</protein>
<dbReference type="EC" id="6.1.1.10" evidence="1"/>
<dbReference type="EMBL" id="CP001275">
    <property type="protein sequence ID" value="ACM05266.1"/>
    <property type="molecule type" value="Genomic_DNA"/>
</dbReference>
<dbReference type="RefSeq" id="WP_015922477.1">
    <property type="nucleotide sequence ID" value="NC_011959.1"/>
</dbReference>
<dbReference type="SMR" id="B9KZR0"/>
<dbReference type="STRING" id="309801.trd_1530"/>
<dbReference type="KEGG" id="tro:trd_1530"/>
<dbReference type="eggNOG" id="COG0143">
    <property type="taxonomic scope" value="Bacteria"/>
</dbReference>
<dbReference type="HOGENOM" id="CLU_009710_1_2_0"/>
<dbReference type="OrthoDB" id="9810191at2"/>
<dbReference type="Proteomes" id="UP000000447">
    <property type="component" value="Chromosome"/>
</dbReference>
<dbReference type="GO" id="GO:0005829">
    <property type="term" value="C:cytosol"/>
    <property type="evidence" value="ECO:0007669"/>
    <property type="project" value="TreeGrafter"/>
</dbReference>
<dbReference type="GO" id="GO:0005524">
    <property type="term" value="F:ATP binding"/>
    <property type="evidence" value="ECO:0007669"/>
    <property type="project" value="UniProtKB-UniRule"/>
</dbReference>
<dbReference type="GO" id="GO:0046872">
    <property type="term" value="F:metal ion binding"/>
    <property type="evidence" value="ECO:0007669"/>
    <property type="project" value="UniProtKB-KW"/>
</dbReference>
<dbReference type="GO" id="GO:0004825">
    <property type="term" value="F:methionine-tRNA ligase activity"/>
    <property type="evidence" value="ECO:0007669"/>
    <property type="project" value="UniProtKB-UniRule"/>
</dbReference>
<dbReference type="GO" id="GO:0006431">
    <property type="term" value="P:methionyl-tRNA aminoacylation"/>
    <property type="evidence" value="ECO:0007669"/>
    <property type="project" value="UniProtKB-UniRule"/>
</dbReference>
<dbReference type="CDD" id="cd07957">
    <property type="entry name" value="Anticodon_Ia_Met"/>
    <property type="match status" value="1"/>
</dbReference>
<dbReference type="CDD" id="cd00814">
    <property type="entry name" value="MetRS_core"/>
    <property type="match status" value="1"/>
</dbReference>
<dbReference type="FunFam" id="2.20.28.20:FF:000001">
    <property type="entry name" value="Methionine--tRNA ligase"/>
    <property type="match status" value="1"/>
</dbReference>
<dbReference type="Gene3D" id="3.40.50.620">
    <property type="entry name" value="HUPs"/>
    <property type="match status" value="1"/>
</dbReference>
<dbReference type="Gene3D" id="1.10.730.10">
    <property type="entry name" value="Isoleucyl-tRNA Synthetase, Domain 1"/>
    <property type="match status" value="1"/>
</dbReference>
<dbReference type="Gene3D" id="2.20.28.20">
    <property type="entry name" value="Methionyl-tRNA synthetase, Zn-domain"/>
    <property type="match status" value="1"/>
</dbReference>
<dbReference type="HAMAP" id="MF_00098">
    <property type="entry name" value="Met_tRNA_synth_type1"/>
    <property type="match status" value="1"/>
</dbReference>
<dbReference type="InterPro" id="IPR001412">
    <property type="entry name" value="aa-tRNA-synth_I_CS"/>
</dbReference>
<dbReference type="InterPro" id="IPR041872">
    <property type="entry name" value="Anticodon_Met"/>
</dbReference>
<dbReference type="InterPro" id="IPR023458">
    <property type="entry name" value="Met-tRNA_ligase_1"/>
</dbReference>
<dbReference type="InterPro" id="IPR014758">
    <property type="entry name" value="Met-tRNA_synth"/>
</dbReference>
<dbReference type="InterPro" id="IPR015413">
    <property type="entry name" value="Methionyl/Leucyl_tRNA_Synth"/>
</dbReference>
<dbReference type="InterPro" id="IPR033911">
    <property type="entry name" value="MetRS_core"/>
</dbReference>
<dbReference type="InterPro" id="IPR029038">
    <property type="entry name" value="MetRS_Zn"/>
</dbReference>
<dbReference type="InterPro" id="IPR014729">
    <property type="entry name" value="Rossmann-like_a/b/a_fold"/>
</dbReference>
<dbReference type="InterPro" id="IPR009080">
    <property type="entry name" value="tRNAsynth_Ia_anticodon-bd"/>
</dbReference>
<dbReference type="NCBIfam" id="TIGR00398">
    <property type="entry name" value="metG"/>
    <property type="match status" value="1"/>
</dbReference>
<dbReference type="NCBIfam" id="NF001100">
    <property type="entry name" value="PRK00133.1"/>
    <property type="match status" value="1"/>
</dbReference>
<dbReference type="PANTHER" id="PTHR45765">
    <property type="entry name" value="METHIONINE--TRNA LIGASE"/>
    <property type="match status" value="1"/>
</dbReference>
<dbReference type="PANTHER" id="PTHR45765:SF1">
    <property type="entry name" value="METHIONINE--TRNA LIGASE, CYTOPLASMIC"/>
    <property type="match status" value="1"/>
</dbReference>
<dbReference type="Pfam" id="PF19303">
    <property type="entry name" value="Anticodon_3"/>
    <property type="match status" value="1"/>
</dbReference>
<dbReference type="Pfam" id="PF09334">
    <property type="entry name" value="tRNA-synt_1g"/>
    <property type="match status" value="1"/>
</dbReference>
<dbReference type="PRINTS" id="PR01041">
    <property type="entry name" value="TRNASYNTHMET"/>
</dbReference>
<dbReference type="SUPFAM" id="SSF47323">
    <property type="entry name" value="Anticodon-binding domain of a subclass of class I aminoacyl-tRNA synthetases"/>
    <property type="match status" value="1"/>
</dbReference>
<dbReference type="SUPFAM" id="SSF57770">
    <property type="entry name" value="Methionyl-tRNA synthetase (MetRS), Zn-domain"/>
    <property type="match status" value="1"/>
</dbReference>
<dbReference type="SUPFAM" id="SSF52374">
    <property type="entry name" value="Nucleotidylyl transferase"/>
    <property type="match status" value="1"/>
</dbReference>
<dbReference type="PROSITE" id="PS00178">
    <property type="entry name" value="AA_TRNA_LIGASE_I"/>
    <property type="match status" value="1"/>
</dbReference>
<reference key="1">
    <citation type="journal article" date="2009" name="PLoS ONE">
        <title>Complete genome sequence of the aerobic CO-oxidizing thermophile Thermomicrobium roseum.</title>
        <authorList>
            <person name="Wu D."/>
            <person name="Raymond J."/>
            <person name="Wu M."/>
            <person name="Chatterji S."/>
            <person name="Ren Q."/>
            <person name="Graham J.E."/>
            <person name="Bryant D.A."/>
            <person name="Robb F."/>
            <person name="Colman A."/>
            <person name="Tallon L.J."/>
            <person name="Badger J.H."/>
            <person name="Madupu R."/>
            <person name="Ward N.L."/>
            <person name="Eisen J.A."/>
        </authorList>
    </citation>
    <scope>NUCLEOTIDE SEQUENCE [LARGE SCALE GENOMIC DNA]</scope>
    <source>
        <strain>ATCC 27502 / DSM 5159 / P-2</strain>
    </source>
</reference>
<name>SYM_THERP</name>
<accession>B9KZR0</accession>
<sequence>MPETIGVFVAWPYANGDLHLGHVAGVYIPADTFARYHRLRGNRVLMVSGSDAHGTPITVAAEREGVTPEDIFRRYHGRFLETYQQLGISFDLFTHTHTANHFRVAQDIFRTLYEKGYIFTQTQIQLYCEYDRRFLPDRYVEGTCPYCGYPNARGDQCDNCGRTLDAIDLIDPRCRLCGQRPLPRETEHFFFDLPAFTDRLLAYLERQTHWRPNVQHFVRNFIQDGLKPRPVSRDLEWGIPLPIPGYEHKVMYVWFEAVIGYLSASIEWSLAEGQPEVWQVWWRDPRARGYYFIGKDNIPFHAIIWPAELMGYDESLNLPYDIPANEFLNLEGQQFSTSRNWAIWVPDFLSRYAPDPLRDYLTSIAPETRDSEFTWQGFVERNNNELLATWGNLVHRILTFVQARFEGRVPEPGALDGRDHLLLDQIAAGFQRIGDLYARVELKAAQREAMALAREVNRYLDEKAPWFQIREDRAAAATTLFVALRAIDSLKLLLAPILPFTSEQLHRLLGYRDRLFGDIVIEPGPETGGHEVLRYRPAASEGRDRWAPSELEAGRPLPPPQPLYQKLEESVIEEERQRLLAQSR</sequence>
<comment type="function">
    <text evidence="1">Is required not only for elongation of protein synthesis but also for the initiation of all mRNA translation through initiator tRNA(fMet) aminoacylation.</text>
</comment>
<comment type="catalytic activity">
    <reaction evidence="1">
        <text>tRNA(Met) + L-methionine + ATP = L-methionyl-tRNA(Met) + AMP + diphosphate</text>
        <dbReference type="Rhea" id="RHEA:13481"/>
        <dbReference type="Rhea" id="RHEA-COMP:9667"/>
        <dbReference type="Rhea" id="RHEA-COMP:9698"/>
        <dbReference type="ChEBI" id="CHEBI:30616"/>
        <dbReference type="ChEBI" id="CHEBI:33019"/>
        <dbReference type="ChEBI" id="CHEBI:57844"/>
        <dbReference type="ChEBI" id="CHEBI:78442"/>
        <dbReference type="ChEBI" id="CHEBI:78530"/>
        <dbReference type="ChEBI" id="CHEBI:456215"/>
        <dbReference type="EC" id="6.1.1.10"/>
    </reaction>
</comment>
<comment type="cofactor">
    <cofactor evidence="1">
        <name>Zn(2+)</name>
        <dbReference type="ChEBI" id="CHEBI:29105"/>
    </cofactor>
    <text evidence="1">Binds 1 zinc ion per subunit.</text>
</comment>
<comment type="subunit">
    <text evidence="1">Monomer.</text>
</comment>
<comment type="subcellular location">
    <subcellularLocation>
        <location evidence="1">Cytoplasm</location>
    </subcellularLocation>
</comment>
<comment type="similarity">
    <text evidence="1">Belongs to the class-I aminoacyl-tRNA synthetase family. MetG type 1 subfamily.</text>
</comment>
<keyword id="KW-0030">Aminoacyl-tRNA synthetase</keyword>
<keyword id="KW-0067">ATP-binding</keyword>
<keyword id="KW-0963">Cytoplasm</keyword>
<keyword id="KW-0436">Ligase</keyword>
<keyword id="KW-0479">Metal-binding</keyword>
<keyword id="KW-0547">Nucleotide-binding</keyword>
<keyword id="KW-0648">Protein biosynthesis</keyword>
<keyword id="KW-1185">Reference proteome</keyword>
<keyword id="KW-0862">Zinc</keyword>
<organism>
    <name type="scientific">Thermomicrobium roseum (strain ATCC 27502 / DSM 5159 / P-2)</name>
    <dbReference type="NCBI Taxonomy" id="309801"/>
    <lineage>
        <taxon>Bacteria</taxon>
        <taxon>Pseudomonadati</taxon>
        <taxon>Thermomicrobiota</taxon>
        <taxon>Thermomicrobia</taxon>
        <taxon>Thermomicrobiales</taxon>
        <taxon>Thermomicrobiaceae</taxon>
        <taxon>Thermomicrobium</taxon>
    </lineage>
</organism>
<gene>
    <name evidence="1" type="primary">metG</name>
    <name type="ordered locus">trd_1530</name>
</gene>